<keyword id="KW-0031">Aminopeptidase</keyword>
<keyword id="KW-0378">Hydrolase</keyword>
<keyword id="KW-0479">Metal-binding</keyword>
<keyword id="KW-0482">Metalloprotease</keyword>
<keyword id="KW-0645">Protease</keyword>
<name>AMP_ACETH</name>
<feature type="chain" id="PRO_0000071654" description="Putative aminopeptidase">
    <location>
        <begin position="1"/>
        <end position="330"/>
    </location>
</feature>
<feature type="active site" description="Proton acceptor" evidence="1">
    <location>
        <position position="198"/>
    </location>
</feature>
<feature type="binding site" evidence="1">
    <location>
        <position position="65"/>
    </location>
    <ligand>
        <name>a divalent metal cation</name>
        <dbReference type="ChEBI" id="CHEBI:60240"/>
        <label>1</label>
    </ligand>
</feature>
<feature type="binding site" evidence="1">
    <location>
        <position position="168"/>
    </location>
    <ligand>
        <name>a divalent metal cation</name>
        <dbReference type="ChEBI" id="CHEBI:60240"/>
        <label>1</label>
    </ligand>
</feature>
<feature type="binding site" evidence="1">
    <location>
        <position position="168"/>
    </location>
    <ligand>
        <name>a divalent metal cation</name>
        <dbReference type="ChEBI" id="CHEBI:60240"/>
        <label>2</label>
    </ligand>
</feature>
<feature type="binding site" evidence="1">
    <location>
        <position position="199"/>
    </location>
    <ligand>
        <name>a divalent metal cation</name>
        <dbReference type="ChEBI" id="CHEBI:60240"/>
        <label>2</label>
    </ligand>
</feature>
<feature type="binding site" evidence="1">
    <location>
        <position position="221"/>
    </location>
    <ligand>
        <name>a divalent metal cation</name>
        <dbReference type="ChEBI" id="CHEBI:60240"/>
        <label>1</label>
    </ligand>
</feature>
<feature type="binding site" evidence="1">
    <location>
        <position position="307"/>
    </location>
    <ligand>
        <name>a divalent metal cation</name>
        <dbReference type="ChEBI" id="CHEBI:60240"/>
        <label>2</label>
    </ligand>
</feature>
<accession>P55742</accession>
<proteinExistence type="inferred from homology"/>
<dbReference type="EC" id="3.4.11.-"/>
<dbReference type="EMBL" id="L13461">
    <property type="status" value="NOT_ANNOTATED_CDS"/>
    <property type="molecule type" value="Genomic_DNA"/>
</dbReference>
<dbReference type="SMR" id="P55742"/>
<dbReference type="MEROPS" id="M42.010"/>
<dbReference type="GO" id="GO:0004177">
    <property type="term" value="F:aminopeptidase activity"/>
    <property type="evidence" value="ECO:0007669"/>
    <property type="project" value="UniProtKB-KW"/>
</dbReference>
<dbReference type="GO" id="GO:0046872">
    <property type="term" value="F:metal ion binding"/>
    <property type="evidence" value="ECO:0007669"/>
    <property type="project" value="UniProtKB-KW"/>
</dbReference>
<dbReference type="GO" id="GO:0008237">
    <property type="term" value="F:metallopeptidase activity"/>
    <property type="evidence" value="ECO:0007669"/>
    <property type="project" value="UniProtKB-KW"/>
</dbReference>
<dbReference type="GO" id="GO:0006508">
    <property type="term" value="P:proteolysis"/>
    <property type="evidence" value="ECO:0007669"/>
    <property type="project" value="UniProtKB-KW"/>
</dbReference>
<dbReference type="CDD" id="cd05656">
    <property type="entry name" value="M42_Frv"/>
    <property type="match status" value="1"/>
</dbReference>
<dbReference type="Gene3D" id="2.40.30.40">
    <property type="entry name" value="Peptidase M42, domain 2"/>
    <property type="match status" value="1"/>
</dbReference>
<dbReference type="Gene3D" id="3.40.630.10">
    <property type="entry name" value="Zn peptidases"/>
    <property type="match status" value="1"/>
</dbReference>
<dbReference type="InterPro" id="IPR008007">
    <property type="entry name" value="Peptidase_M42"/>
</dbReference>
<dbReference type="InterPro" id="IPR051464">
    <property type="entry name" value="Peptidase_M42_aminopept"/>
</dbReference>
<dbReference type="InterPro" id="IPR023367">
    <property type="entry name" value="Peptidase_M42_dom2"/>
</dbReference>
<dbReference type="PANTHER" id="PTHR32481">
    <property type="entry name" value="AMINOPEPTIDASE"/>
    <property type="match status" value="1"/>
</dbReference>
<dbReference type="PANTHER" id="PTHR32481:SF9">
    <property type="entry name" value="ENDOGLUCANASE"/>
    <property type="match status" value="1"/>
</dbReference>
<dbReference type="Pfam" id="PF05343">
    <property type="entry name" value="Peptidase_M42"/>
    <property type="match status" value="1"/>
</dbReference>
<dbReference type="PIRSF" id="PIRSF001123">
    <property type="entry name" value="PepA_GA"/>
    <property type="match status" value="1"/>
</dbReference>
<dbReference type="SUPFAM" id="SSF101821">
    <property type="entry name" value="Aminopeptidase/glucanase lid domain"/>
    <property type="match status" value="1"/>
</dbReference>
<dbReference type="SUPFAM" id="SSF53187">
    <property type="entry name" value="Zn-dependent exopeptidases"/>
    <property type="match status" value="1"/>
</dbReference>
<sequence>MEEEDMFDLLKKFTGIVGVSGNEEEIREAIIEEIKECVDEIKVDTLGNLIAVKKGKGKKIMVAAHMDEIGVMVTYIDDKGFLRFSAVGGVSRYDCIGQRVKFKNGVVGAVYYEEKLEDMKNLQLSKMYIDIGARSREEALKMVNIGDVACFVGDAVLQGDTVISKALDNRSGCAVVVKAIKELKKTDNEIYFVFTVQEEVGLRGAKTAAFSIKPDIAIAVDVTMTGDTPESHPMEVKCGGGPAIKVKDRSVICHPEVRKLLEESAKRNNIPYQLEILEAGGSDPGSIHLTAGGIPSGAISIPVRYVHSPVETASMSDINNAVKLLVEAIC</sequence>
<protein>
    <recommendedName>
        <fullName>Putative aminopeptidase</fullName>
        <ecNumber>3.4.11.-</ecNumber>
    </recommendedName>
</protein>
<reference key="1">
    <citation type="submission" date="1993-04" db="EMBL/GenBank/DDBJ databases">
        <title>Nucleotide sequence of a gene celM encoding a new endoglucanase (CelM) of Clostridium thermocellum and purification of the enzyme.</title>
        <authorList>
            <person name="Gerngross U.T."/>
            <person name="Demain A.L."/>
            <person name="Kobayashi T.T."/>
        </authorList>
    </citation>
    <scope>NUCLEOTIDE SEQUENCE [GENOMIC DNA]</scope>
</reference>
<evidence type="ECO:0000250" key="1"/>
<evidence type="ECO:0000305" key="2"/>
<gene>
    <name type="primary">celM</name>
</gene>
<organism>
    <name type="scientific">Acetivibrio thermocellus</name>
    <name type="common">Hungateiclostridium thermocellum</name>
    <name type="synonym">Clostridium thermocellum</name>
    <dbReference type="NCBI Taxonomy" id="1515"/>
    <lineage>
        <taxon>Bacteria</taxon>
        <taxon>Bacillati</taxon>
        <taxon>Bacillota</taxon>
        <taxon>Clostridia</taxon>
        <taxon>Eubacteriales</taxon>
        <taxon>Oscillospiraceae</taxon>
        <taxon>Acetivibrio</taxon>
    </lineage>
</organism>
<comment type="cofactor">
    <cofactor evidence="1">
        <name>a divalent metal cation</name>
        <dbReference type="ChEBI" id="CHEBI:60240"/>
    </cofactor>
    <text evidence="1">Binds 2 divalent metal cations per subunit.</text>
</comment>
<comment type="similarity">
    <text evidence="2">Belongs to the peptidase M42 family.</text>
</comment>